<reference key="1">
    <citation type="journal article" date="2011" name="J. Bacteriol.">
        <title>Comparative genomics of 28 Salmonella enterica isolates: evidence for CRISPR-mediated adaptive sublineage evolution.</title>
        <authorList>
            <person name="Fricke W.F."/>
            <person name="Mammel M.K."/>
            <person name="McDermott P.F."/>
            <person name="Tartera C."/>
            <person name="White D.G."/>
            <person name="Leclerc J.E."/>
            <person name="Ravel J."/>
            <person name="Cebula T.A."/>
        </authorList>
    </citation>
    <scope>NUCLEOTIDE SEQUENCE [LARGE SCALE GENOMIC DNA]</scope>
    <source>
        <strain>SL254</strain>
    </source>
</reference>
<name>RS10_SALNS</name>
<proteinExistence type="inferred from homology"/>
<organism>
    <name type="scientific">Salmonella newport (strain SL254)</name>
    <dbReference type="NCBI Taxonomy" id="423368"/>
    <lineage>
        <taxon>Bacteria</taxon>
        <taxon>Pseudomonadati</taxon>
        <taxon>Pseudomonadota</taxon>
        <taxon>Gammaproteobacteria</taxon>
        <taxon>Enterobacterales</taxon>
        <taxon>Enterobacteriaceae</taxon>
        <taxon>Salmonella</taxon>
    </lineage>
</organism>
<dbReference type="EMBL" id="CP001113">
    <property type="protein sequence ID" value="ACF62531.1"/>
    <property type="molecule type" value="Genomic_DNA"/>
</dbReference>
<dbReference type="RefSeq" id="WP_001181005.1">
    <property type="nucleotide sequence ID" value="NZ_CCMR01000003.1"/>
</dbReference>
<dbReference type="SMR" id="B4SUU1"/>
<dbReference type="GeneID" id="98390443"/>
<dbReference type="KEGG" id="see:SNSL254_A3710"/>
<dbReference type="HOGENOM" id="CLU_122625_1_3_6"/>
<dbReference type="Proteomes" id="UP000008824">
    <property type="component" value="Chromosome"/>
</dbReference>
<dbReference type="GO" id="GO:1990904">
    <property type="term" value="C:ribonucleoprotein complex"/>
    <property type="evidence" value="ECO:0007669"/>
    <property type="project" value="UniProtKB-KW"/>
</dbReference>
<dbReference type="GO" id="GO:0005840">
    <property type="term" value="C:ribosome"/>
    <property type="evidence" value="ECO:0007669"/>
    <property type="project" value="UniProtKB-KW"/>
</dbReference>
<dbReference type="GO" id="GO:0003735">
    <property type="term" value="F:structural constituent of ribosome"/>
    <property type="evidence" value="ECO:0007669"/>
    <property type="project" value="InterPro"/>
</dbReference>
<dbReference type="GO" id="GO:0000049">
    <property type="term" value="F:tRNA binding"/>
    <property type="evidence" value="ECO:0007669"/>
    <property type="project" value="UniProtKB-UniRule"/>
</dbReference>
<dbReference type="GO" id="GO:0006412">
    <property type="term" value="P:translation"/>
    <property type="evidence" value="ECO:0007669"/>
    <property type="project" value="UniProtKB-UniRule"/>
</dbReference>
<dbReference type="FunFam" id="3.30.70.600:FF:000001">
    <property type="entry name" value="30S ribosomal protein S10"/>
    <property type="match status" value="1"/>
</dbReference>
<dbReference type="Gene3D" id="3.30.70.600">
    <property type="entry name" value="Ribosomal protein S10 domain"/>
    <property type="match status" value="1"/>
</dbReference>
<dbReference type="HAMAP" id="MF_00508">
    <property type="entry name" value="Ribosomal_uS10"/>
    <property type="match status" value="1"/>
</dbReference>
<dbReference type="InterPro" id="IPR001848">
    <property type="entry name" value="Ribosomal_uS10"/>
</dbReference>
<dbReference type="InterPro" id="IPR018268">
    <property type="entry name" value="Ribosomal_uS10_CS"/>
</dbReference>
<dbReference type="InterPro" id="IPR027486">
    <property type="entry name" value="Ribosomal_uS10_dom"/>
</dbReference>
<dbReference type="InterPro" id="IPR036838">
    <property type="entry name" value="Ribosomal_uS10_dom_sf"/>
</dbReference>
<dbReference type="NCBIfam" id="NF001861">
    <property type="entry name" value="PRK00596.1"/>
    <property type="match status" value="1"/>
</dbReference>
<dbReference type="NCBIfam" id="TIGR01049">
    <property type="entry name" value="rpsJ_bact"/>
    <property type="match status" value="1"/>
</dbReference>
<dbReference type="PANTHER" id="PTHR11700">
    <property type="entry name" value="30S RIBOSOMAL PROTEIN S10 FAMILY MEMBER"/>
    <property type="match status" value="1"/>
</dbReference>
<dbReference type="Pfam" id="PF00338">
    <property type="entry name" value="Ribosomal_S10"/>
    <property type="match status" value="1"/>
</dbReference>
<dbReference type="PRINTS" id="PR00971">
    <property type="entry name" value="RIBOSOMALS10"/>
</dbReference>
<dbReference type="SMART" id="SM01403">
    <property type="entry name" value="Ribosomal_S10"/>
    <property type="match status" value="1"/>
</dbReference>
<dbReference type="SUPFAM" id="SSF54999">
    <property type="entry name" value="Ribosomal protein S10"/>
    <property type="match status" value="1"/>
</dbReference>
<dbReference type="PROSITE" id="PS00361">
    <property type="entry name" value="RIBOSOMAL_S10"/>
    <property type="match status" value="1"/>
</dbReference>
<keyword id="KW-0687">Ribonucleoprotein</keyword>
<keyword id="KW-0689">Ribosomal protein</keyword>
<sequence length="103" mass="11767">MQNQRIRIRLKAFDHRLIDQSTAEIVETAKRTGAQVRGPIPLPTRKERFTVLISPHVNKDARDQYEIRTHKRLVDIVEPTEKTVDALMRLDLAAGVDVQISLG</sequence>
<evidence type="ECO:0000255" key="1">
    <source>
        <dbReference type="HAMAP-Rule" id="MF_00508"/>
    </source>
</evidence>
<evidence type="ECO:0000305" key="2"/>
<accession>B4SUU1</accession>
<comment type="function">
    <text evidence="1">Involved in the binding of tRNA to the ribosomes.</text>
</comment>
<comment type="subunit">
    <text evidence="1">Part of the 30S ribosomal subunit.</text>
</comment>
<comment type="similarity">
    <text evidence="1">Belongs to the universal ribosomal protein uS10 family.</text>
</comment>
<feature type="chain" id="PRO_1000127180" description="Small ribosomal subunit protein uS10">
    <location>
        <begin position="1"/>
        <end position="103"/>
    </location>
</feature>
<protein>
    <recommendedName>
        <fullName evidence="1">Small ribosomal subunit protein uS10</fullName>
    </recommendedName>
    <alternativeName>
        <fullName evidence="2">30S ribosomal protein S10</fullName>
    </alternativeName>
</protein>
<gene>
    <name evidence="1" type="primary">rpsJ</name>
    <name type="ordered locus">SNSL254_A3710</name>
</gene>